<protein>
    <recommendedName>
        <fullName>Peroniin-1.1b</fullName>
    </recommendedName>
</protein>
<dbReference type="GO" id="GO:0005576">
    <property type="term" value="C:extracellular region"/>
    <property type="evidence" value="ECO:0000314"/>
    <property type="project" value="UniProtKB"/>
</dbReference>
<dbReference type="GO" id="GO:0006952">
    <property type="term" value="P:defense response"/>
    <property type="evidence" value="ECO:0007669"/>
    <property type="project" value="UniProtKB-KW"/>
</dbReference>
<name>PE11B_LITPE</name>
<comment type="subcellular location">
    <subcellularLocation>
        <location evidence="1">Secreted</location>
    </subcellularLocation>
</comment>
<comment type="tissue specificity">
    <text evidence="1">Expressed by the skin dorsal glands.</text>
</comment>
<comment type="mass spectrometry"/>
<comment type="similarity">
    <text evidence="2">Belongs to the frog skin active peptide (FSAP) family. Peroniin subfamily.</text>
</comment>
<sequence>SEEEKRQPWLPFG</sequence>
<reference evidence="2" key="1">
    <citation type="journal article" date="2009" name="Rapid Commun. Mass Spectrom.">
        <title>The host-defence skin peptide profiles of Peron's Tree Frog Litoria peronii in winter and summer. Sequence determination by electrospray mass spectrometry and activities of the peptides.</title>
        <authorList>
            <person name="Bilusich D."/>
            <person name="Jackway R.J."/>
            <person name="Musgrave I.F."/>
            <person name="Tyler M.J."/>
            <person name="Bowie J.H."/>
        </authorList>
    </citation>
    <scope>PROTEIN SEQUENCE</scope>
    <scope>SUBCELLULAR LOCATION</scope>
    <scope>TISSUE SPECIFICITY</scope>
    <scope>MASS SPECTROMETRY</scope>
    <scope>AMIDATION AT GLY-13</scope>
    <source>
        <tissue evidence="1">Skin secretion</tissue>
    </source>
</reference>
<keyword id="KW-0027">Amidation</keyword>
<keyword id="KW-0878">Amphibian defense peptide</keyword>
<keyword id="KW-0903">Direct protein sequencing</keyword>
<keyword id="KW-0964">Secreted</keyword>
<accession>P86495</accession>
<organism>
    <name type="scientific">Litoria peronii</name>
    <name type="common">Emerald spotted tree frog</name>
    <name type="synonym">Hyla peronii</name>
    <dbReference type="NCBI Taxonomy" id="317363"/>
    <lineage>
        <taxon>Eukaryota</taxon>
        <taxon>Metazoa</taxon>
        <taxon>Chordata</taxon>
        <taxon>Craniata</taxon>
        <taxon>Vertebrata</taxon>
        <taxon>Euteleostomi</taxon>
        <taxon>Amphibia</taxon>
        <taxon>Batrachia</taxon>
        <taxon>Anura</taxon>
        <taxon>Neobatrachia</taxon>
        <taxon>Hyloidea</taxon>
        <taxon>Hylidae</taxon>
        <taxon>Pelodryadinae</taxon>
        <taxon>Litoria</taxon>
    </lineage>
</organism>
<evidence type="ECO:0000269" key="1">
    <source>
    </source>
</evidence>
<evidence type="ECO:0000305" key="2"/>
<feature type="peptide" id="PRO_0000394180" description="Peroniin-1.1b">
    <location>
        <begin position="1"/>
        <end position="13"/>
    </location>
</feature>
<feature type="modified residue" description="Glycine amide" evidence="1">
    <location>
        <position position="13"/>
    </location>
</feature>
<proteinExistence type="evidence at protein level"/>